<protein>
    <recommendedName>
        <fullName evidence="6">Cilia- and flagella-associated protein 298</fullName>
    </recommendedName>
    <alternativeName>
        <fullName evidence="5">Protein kurly</fullName>
    </alternativeName>
</protein>
<organism>
    <name type="scientific">Danio rerio</name>
    <name type="common">Zebrafish</name>
    <name type="synonym">Brachydanio rerio</name>
    <dbReference type="NCBI Taxonomy" id="7955"/>
    <lineage>
        <taxon>Eukaryota</taxon>
        <taxon>Metazoa</taxon>
        <taxon>Chordata</taxon>
        <taxon>Craniata</taxon>
        <taxon>Vertebrata</taxon>
        <taxon>Euteleostomi</taxon>
        <taxon>Actinopterygii</taxon>
        <taxon>Neopterygii</taxon>
        <taxon>Teleostei</taxon>
        <taxon>Ostariophysi</taxon>
        <taxon>Cypriniformes</taxon>
        <taxon>Danionidae</taxon>
        <taxon>Danioninae</taxon>
        <taxon>Danio</taxon>
    </lineage>
</organism>
<reference key="1">
    <citation type="journal article" date="2004" name="Proc. Natl. Acad. Sci. U.S.A.">
        <title>Identification of 315 genes essential for early zebrafish development.</title>
        <authorList>
            <person name="Amsterdam A."/>
            <person name="Nissen R.M."/>
            <person name="Sun Z."/>
            <person name="Swindell E.C."/>
            <person name="Farrington S."/>
            <person name="Hopkins N."/>
        </authorList>
    </citation>
    <scope>NUCLEOTIDE SEQUENCE [LARGE SCALE MRNA]</scope>
</reference>
<reference key="2">
    <citation type="submission" date="2007-10" db="EMBL/GenBank/DDBJ databases">
        <authorList>
            <consortium name="NIH - Zebrafish Gene Collection (ZGC) project"/>
        </authorList>
    </citation>
    <scope>NUCLEOTIDE SEQUENCE [LARGE SCALE MRNA]</scope>
    <source>
        <tissue>Kidney</tissue>
        <tissue>Ovary</tissue>
    </source>
</reference>
<reference key="3">
    <citation type="journal article" date="2013" name="Am. J. Hum. Genet.">
        <title>Zebrafish ciliopathy screen plus human mutational analysis identifies C21orf59 and CCDC65 defects as causing primary ciliary dyskinesia.</title>
        <authorList>
            <person name="Austin-Tse C."/>
            <person name="Halbritter J."/>
            <person name="Zariwala M.A."/>
            <person name="Gilberti R.M."/>
            <person name="Gee H.Y."/>
            <person name="Hellman N."/>
            <person name="Pathak N."/>
            <person name="Liu Y."/>
            <person name="Panizzi J.R."/>
            <person name="Patel-King R.S."/>
            <person name="Tritschler D."/>
            <person name="Bower R."/>
            <person name="O'Toole E."/>
            <person name="Porath J.D."/>
            <person name="Hurd T.W."/>
            <person name="Chaki M."/>
            <person name="Diaz K.A."/>
            <person name="Kohl S."/>
            <person name="Lovric S."/>
            <person name="Hwang D.Y."/>
            <person name="Braun D.A."/>
            <person name="Schueler M."/>
            <person name="Airik R."/>
            <person name="Otto E.A."/>
            <person name="Leigh M.W."/>
            <person name="Noone P.G."/>
            <person name="Carson J.L."/>
            <person name="Davis S.D."/>
            <person name="Pittman J.E."/>
            <person name="Ferkol T.W."/>
            <person name="Atkinson J.J."/>
            <person name="Olivier K.N."/>
            <person name="Sagel S.D."/>
            <person name="Dell S.D."/>
            <person name="Rosenfeld M."/>
            <person name="Milla C.E."/>
            <person name="Loges N.T."/>
            <person name="Omran H."/>
            <person name="Porter M.E."/>
            <person name="King S.M."/>
            <person name="Knowles M.R."/>
            <person name="Drummond I.A."/>
            <person name="Hildebrandt F."/>
        </authorList>
    </citation>
    <scope>FUNCTION</scope>
    <scope>TISSUE SPECIFICITY</scope>
    <scope>DISRUPTION PHENOTYPE</scope>
</reference>
<reference key="4">
    <citation type="journal article" date="2016" name="Cell Rep.">
        <title>c21orf59/kurly controls both cilia motility and polarization.</title>
        <authorList>
            <person name="Jaffe K.M."/>
            <person name="Grimes D.T."/>
            <person name="Schottenfeld-Roames J."/>
            <person name="Werner M.E."/>
            <person name="Ku T.S."/>
            <person name="Kim S.K."/>
            <person name="Pelliccia J.L."/>
            <person name="Morante N.F."/>
            <person name="Mitchell B.J."/>
            <person name="Burdine R.D."/>
        </authorList>
    </citation>
    <scope>FUNCTION</scope>
    <scope>INTERACTION WITH DNAAF1; DVL AND LRRC6</scope>
    <scope>SUBCELLULAR LOCATION</scope>
    <scope>DEVELOPMENTAL STAGE</scope>
    <scope>DISRUPTION PHENOTYPE</scope>
    <scope>MUTAGENESIS OF ILE-44</scope>
</reference>
<sequence length="290" mass="33540">MVQLHVKRGDESQFLFNTTVDVQIETLTQQICEIYNARLKVDRICTEIPELADHGISLPPNMQGLTDDQIVELKLKDEWEERCIPSGGAEFKKDEIGRRNGHAPNEKMKDVLRRTMEEAKALISKKQLQANVCVTMEMVKEALDQLRGAVMIVYPMGLPPHDPIRMEIENQEDLTGTQASLQVITNEEAQLWWASKELHRGKKLQDYIGKNEKTKIIVKIQKRGQGAPAREPVVSEDEQKQMMLHYYKRQEELKKLEEADDDTHLQSEWSDRQALKRQFQGLTNIKWGPR</sequence>
<proteinExistence type="evidence at protein level"/>
<keyword id="KW-0966">Cell projection</keyword>
<keyword id="KW-0969">Cilium</keyword>
<keyword id="KW-0963">Cytoplasm</keyword>
<keyword id="KW-0206">Cytoskeleton</keyword>
<keyword id="KW-1185">Reference proteome</keyword>
<evidence type="ECO:0000250" key="1">
    <source>
        <dbReference type="UniProtKB" id="A0A1L8HCK2"/>
    </source>
</evidence>
<evidence type="ECO:0000250" key="2">
    <source>
        <dbReference type="UniProtKB" id="P57076"/>
    </source>
</evidence>
<evidence type="ECO:0000269" key="3">
    <source>
    </source>
</evidence>
<evidence type="ECO:0000269" key="4">
    <source>
    </source>
</evidence>
<evidence type="ECO:0000303" key="5">
    <source>
    </source>
</evidence>
<evidence type="ECO:0000305" key="6"/>
<gene>
    <name evidence="2" type="primary">cfap298</name>
    <name evidence="5" type="synonym">kur</name>
</gene>
<feature type="chain" id="PRO_0000360153" description="Cilia- and flagella-associated protein 298">
    <location>
        <begin position="1"/>
        <end position="290"/>
    </location>
</feature>
<feature type="mutagenesis site" description="In tm304; temperature sensitive allele with strongest phenotypes at 32 degrees Celsius and milder phenotypes at 25 degrees Celsius. Body curvature defects and kidney cysts are seen in larval stages. Left-right asymmetry is abnormal with reversed or random positioning of heart, liver and pancreas. Males are infertile. Cilium length and number are unaffected. Initiation of cilium motility is impaired, and cilium outer dynein arms are absent. Cilium polarity is disorganized." evidence="4">
    <original>I</original>
    <variation>N</variation>
    <location>
        <position position="44"/>
    </location>
</feature>
<feature type="sequence conflict" description="In Ref. 2; AAH53230." evidence="6" ref="2">
    <original>T</original>
    <variation>S</variation>
    <location>
        <position position="46"/>
    </location>
</feature>
<accession>Q6DRC3</accession>
<accession>Q7T371</accession>
<name>CF298_DANRE</name>
<dbReference type="EMBL" id="AY648836">
    <property type="protein sequence ID" value="AAT68154.1"/>
    <property type="molecule type" value="mRNA"/>
</dbReference>
<dbReference type="EMBL" id="BC053230">
    <property type="protein sequence ID" value="AAH53230.1"/>
    <property type="molecule type" value="mRNA"/>
</dbReference>
<dbReference type="EMBL" id="BC154333">
    <property type="protein sequence ID" value="AAI54334.1"/>
    <property type="molecule type" value="mRNA"/>
</dbReference>
<dbReference type="RefSeq" id="NP_956382.1">
    <property type="nucleotide sequence ID" value="NM_200088.1"/>
</dbReference>
<dbReference type="FunCoup" id="Q6DRC3">
    <property type="interactions" value="1257"/>
</dbReference>
<dbReference type="STRING" id="7955.ENSDARP00000104844"/>
<dbReference type="PaxDb" id="7955-ENSDARP00000104844"/>
<dbReference type="GeneID" id="792532"/>
<dbReference type="KEGG" id="dre:792532"/>
<dbReference type="AGR" id="ZFIN:ZDB-GENE-040930-8"/>
<dbReference type="CTD" id="56683"/>
<dbReference type="ZFIN" id="ZDB-GENE-040930-8">
    <property type="gene designation" value="cfap298"/>
</dbReference>
<dbReference type="eggNOG" id="ENOG502QQ3Z">
    <property type="taxonomic scope" value="Eukaryota"/>
</dbReference>
<dbReference type="InParanoid" id="Q6DRC3"/>
<dbReference type="OrthoDB" id="276065at2759"/>
<dbReference type="PhylomeDB" id="Q6DRC3"/>
<dbReference type="PRO" id="PR:Q6DRC3"/>
<dbReference type="Proteomes" id="UP000000437">
    <property type="component" value="Alternate scaffold 10"/>
</dbReference>
<dbReference type="Proteomes" id="UP000000437">
    <property type="component" value="Chromosome 10"/>
</dbReference>
<dbReference type="GO" id="GO:0005929">
    <property type="term" value="C:cilium"/>
    <property type="evidence" value="ECO:0007669"/>
    <property type="project" value="UniProtKB-KW"/>
</dbReference>
<dbReference type="GO" id="GO:0005737">
    <property type="term" value="C:cytoplasm"/>
    <property type="evidence" value="ECO:0007669"/>
    <property type="project" value="UniProtKB-SubCell"/>
</dbReference>
<dbReference type="GO" id="GO:0005856">
    <property type="term" value="C:cytoskeleton"/>
    <property type="evidence" value="ECO:0007669"/>
    <property type="project" value="UniProtKB-KW"/>
</dbReference>
<dbReference type="GO" id="GO:0005576">
    <property type="term" value="C:extracellular region"/>
    <property type="evidence" value="ECO:0007669"/>
    <property type="project" value="GOC"/>
</dbReference>
<dbReference type="GO" id="GO:0090660">
    <property type="term" value="P:cerebrospinal fluid circulation"/>
    <property type="evidence" value="ECO:0000315"/>
    <property type="project" value="ZFIN"/>
</dbReference>
<dbReference type="GO" id="GO:0060271">
    <property type="term" value="P:cilium assembly"/>
    <property type="evidence" value="ECO:0000315"/>
    <property type="project" value="ZFIN"/>
</dbReference>
<dbReference type="GO" id="GO:0007368">
    <property type="term" value="P:determination of left/right symmetry"/>
    <property type="evidence" value="ECO:0000315"/>
    <property type="project" value="ZFIN"/>
</dbReference>
<dbReference type="GO" id="GO:0044458">
    <property type="term" value="P:motile cilium assembly"/>
    <property type="evidence" value="ECO:0000315"/>
    <property type="project" value="ZFIN"/>
</dbReference>
<dbReference type="GO" id="GO:0048793">
    <property type="term" value="P:pronephros development"/>
    <property type="evidence" value="ECO:0000315"/>
    <property type="project" value="ZFIN"/>
</dbReference>
<dbReference type="GO" id="GO:0072114">
    <property type="term" value="P:pronephros morphogenesis"/>
    <property type="evidence" value="ECO:0000316"/>
    <property type="project" value="ZFIN"/>
</dbReference>
<dbReference type="GO" id="GO:0003352">
    <property type="term" value="P:regulation of cilium movement"/>
    <property type="evidence" value="ECO:0000315"/>
    <property type="project" value="ZFIN"/>
</dbReference>
<dbReference type="InterPro" id="IPR021298">
    <property type="entry name" value="CFAP298"/>
</dbReference>
<dbReference type="PANTHER" id="PTHR13238:SF0">
    <property type="entry name" value="CILIA- AND FLAGELLA-ASSOCIATED PROTEIN 298"/>
    <property type="match status" value="1"/>
</dbReference>
<dbReference type="PANTHER" id="PTHR13238">
    <property type="entry name" value="PROTEIN C21ORF59"/>
    <property type="match status" value="1"/>
</dbReference>
<dbReference type="Pfam" id="PF11069">
    <property type="entry name" value="CFAP298"/>
    <property type="match status" value="1"/>
</dbReference>
<comment type="function">
    <text evidence="3 4">Plays a role in motile cilium function, possibly by acting on outer dynein arm assembly (PubMed:24094744, PubMed:26904945). Seems to be important for initiation rather than maintenance of cilium motility (PubMed:26904945). Required for correct positioning of cilia at the apical cell surface, suggesting an additional role in the planar cell polarity (PCP) pathway (PubMed:26904945). May suppress canonical Wnt signaling activity (PubMed:26904945).</text>
</comment>
<comment type="subunit">
    <text evidence="4">Interacts with dnaaf1/swt. Interacts with lrrc6/sea. Interacts with dvl (via DEP and PDZ domains).</text>
</comment>
<comment type="subcellular location">
    <subcellularLocation>
        <location evidence="4">Cytoplasm</location>
    </subcellularLocation>
    <subcellularLocation>
        <location evidence="1">Cytoplasm</location>
        <location evidence="1">Cytoskeleton</location>
        <location evidence="1">Cilium basal body</location>
    </subcellularLocation>
    <text evidence="4">Appears in cytoplasmic puncta, compatible with a centrosomal localization.</text>
</comment>
<comment type="tissue specificity">
    <text evidence="3">Strongly expressed in ciliated tissues of the embryonic trunk, including the pronephric ducts and spinal canal.</text>
</comment>
<comment type="developmental stage">
    <text evidence="4">Detected at the 1-cell embryo stage, probably due to inheritance of maternal transcripts. At the 50% ebiboly stage, detected in dorsal forerunner cells. At the 3-somite stage, found in Kupffer's vesicle. At the 8-somite stage, expressed in the pronephros, the floorplate of the neural tube, and otic vesicles. Expression in the pronephros continues to the 24-somite stage.</text>
</comment>
<comment type="disruption phenotype">
    <text evidence="3 4">Larval lethal (PubMed:26904945). Animals show strong ciliopathy phenotypes, including pronephric cysts, axis curvature, left-right asymmetry defects and hydrocephalus (PubMed:26904945). Kidney tubules are dilated and polarity of cilia in the epithelium is disorganized (PubMed:26904945). Cilia length and number appear normal, but outer dynein arms are missing and cilia are paralyzed (PubMed:26904945). Morpholino knockdown of the protein results in similar phenotypes (PubMed:24094744, PubMed:26904945).</text>
</comment>
<comment type="similarity">
    <text evidence="6">Belongs to the CFAP298 family.</text>
</comment>